<accession>P26221</accession>
<accession>Q08167</accession>
<comment type="catalytic activity">
    <reaction>
        <text>Endohydrolysis of (1-&gt;4)-beta-D-glucosidic linkages in cellulose, lichenin and cereal beta-D-glucans.</text>
        <dbReference type="EC" id="3.2.1.4"/>
    </reaction>
</comment>
<comment type="pathway">
    <text>Glycan metabolism; cellulose degradation.</text>
</comment>
<comment type="similarity">
    <text evidence="7 10">Belongs to the glycosyl hydrolase 9 (cellulase E) family.</text>
</comment>
<gene>
    <name type="primary">celD</name>
</gene>
<evidence type="ECO:0000250" key="1"/>
<evidence type="ECO:0000255" key="2">
    <source>
        <dbReference type="PROSITE-ProRule" id="PRU00316"/>
    </source>
</evidence>
<evidence type="ECO:0000255" key="3">
    <source>
        <dbReference type="PROSITE-ProRule" id="PRU00513"/>
    </source>
</evidence>
<evidence type="ECO:0000255" key="4">
    <source>
        <dbReference type="PROSITE-ProRule" id="PRU01135"/>
    </source>
</evidence>
<evidence type="ECO:0000255" key="5">
    <source>
        <dbReference type="PROSITE-ProRule" id="PRU10059"/>
    </source>
</evidence>
<evidence type="ECO:0000255" key="6">
    <source>
        <dbReference type="PROSITE-ProRule" id="PRU10060"/>
    </source>
</evidence>
<evidence type="ECO:0000255" key="7">
    <source>
        <dbReference type="PROSITE-ProRule" id="PRU10140"/>
    </source>
</evidence>
<evidence type="ECO:0000256" key="8">
    <source>
        <dbReference type="SAM" id="MobiDB-lite"/>
    </source>
</evidence>
<evidence type="ECO:0000269" key="9">
    <source ref="4"/>
</evidence>
<evidence type="ECO:0000305" key="10"/>
<evidence type="ECO:0007829" key="11">
    <source>
        <dbReference type="PDB" id="1JS4"/>
    </source>
</evidence>
<evidence type="ECO:0007829" key="12">
    <source>
        <dbReference type="PDB" id="1TF4"/>
    </source>
</evidence>
<organism>
    <name type="scientific">Thermobifida fusca</name>
    <name type="common">Thermomonospora fusca</name>
    <dbReference type="NCBI Taxonomy" id="2021"/>
    <lineage>
        <taxon>Bacteria</taxon>
        <taxon>Bacillati</taxon>
        <taxon>Actinomycetota</taxon>
        <taxon>Actinomycetes</taxon>
        <taxon>Streptosporangiales</taxon>
        <taxon>Nocardiopsidaceae</taxon>
        <taxon>Thermobifida</taxon>
    </lineage>
</organism>
<dbReference type="EC" id="3.2.1.4"/>
<dbReference type="EMBL" id="L20093">
    <property type="protein sequence ID" value="AAB42155.1"/>
    <property type="molecule type" value="Genomic_DNA"/>
</dbReference>
<dbReference type="PIR" id="B42360">
    <property type="entry name" value="B42360"/>
</dbReference>
<dbReference type="RefSeq" id="WP_011292599.1">
    <property type="nucleotide sequence ID" value="NZ_QGVG01000004.1"/>
</dbReference>
<dbReference type="PDB" id="1JS4">
    <property type="method" value="X-ray"/>
    <property type="resolution" value="2.00 A"/>
    <property type="chains" value="A/B=47-651"/>
</dbReference>
<dbReference type="PDB" id="1TF4">
    <property type="method" value="X-ray"/>
    <property type="resolution" value="1.90 A"/>
    <property type="chains" value="A/B=47-651"/>
</dbReference>
<dbReference type="PDB" id="3TF4">
    <property type="method" value="X-ray"/>
    <property type="resolution" value="2.20 A"/>
    <property type="chains" value="A/B=47-651"/>
</dbReference>
<dbReference type="PDB" id="4TF4">
    <property type="method" value="X-ray"/>
    <property type="resolution" value="2.00 A"/>
    <property type="chains" value="A/B=47-651"/>
</dbReference>
<dbReference type="PDBsum" id="1JS4"/>
<dbReference type="PDBsum" id="1TF4"/>
<dbReference type="PDBsum" id="3TF4"/>
<dbReference type="PDBsum" id="4TF4"/>
<dbReference type="SMR" id="P26221"/>
<dbReference type="DrugBank" id="DB02379">
    <property type="generic name" value="Beta-D-Glucose"/>
</dbReference>
<dbReference type="CAZy" id="CBM2">
    <property type="family name" value="Carbohydrate-Binding Module Family 2"/>
</dbReference>
<dbReference type="CAZy" id="CBM3">
    <property type="family name" value="Carbohydrate-Binding Module Family 3"/>
</dbReference>
<dbReference type="CAZy" id="GH9">
    <property type="family name" value="Glycoside Hydrolase Family 9"/>
</dbReference>
<dbReference type="OMA" id="RWLDYWT"/>
<dbReference type="BRENDA" id="3.2.1.4">
    <property type="organism ID" value="6298"/>
</dbReference>
<dbReference type="BRENDA" id="3.2.1.B42">
    <property type="organism ID" value="6298"/>
</dbReference>
<dbReference type="UniPathway" id="UPA00696"/>
<dbReference type="EvolutionaryTrace" id="P26221"/>
<dbReference type="GO" id="GO:0008810">
    <property type="term" value="F:cellulase activity"/>
    <property type="evidence" value="ECO:0007669"/>
    <property type="project" value="UniProtKB-EC"/>
</dbReference>
<dbReference type="GO" id="GO:0030248">
    <property type="term" value="F:cellulose binding"/>
    <property type="evidence" value="ECO:0007669"/>
    <property type="project" value="InterPro"/>
</dbReference>
<dbReference type="GO" id="GO:0030245">
    <property type="term" value="P:cellulose catabolic process"/>
    <property type="evidence" value="ECO:0007669"/>
    <property type="project" value="UniProtKB-UniPathway"/>
</dbReference>
<dbReference type="CDD" id="cd00063">
    <property type="entry name" value="FN3"/>
    <property type="match status" value="1"/>
</dbReference>
<dbReference type="FunFam" id="1.50.10.10:FF:000020">
    <property type="entry name" value="Endoglucanase"/>
    <property type="match status" value="1"/>
</dbReference>
<dbReference type="Gene3D" id="1.50.10.10">
    <property type="match status" value="1"/>
</dbReference>
<dbReference type="Gene3D" id="2.60.40.290">
    <property type="match status" value="1"/>
</dbReference>
<dbReference type="Gene3D" id="2.60.40.710">
    <property type="entry name" value="Endoglucanase-like"/>
    <property type="match status" value="1"/>
</dbReference>
<dbReference type="Gene3D" id="2.60.40.10">
    <property type="entry name" value="Immunoglobulins"/>
    <property type="match status" value="1"/>
</dbReference>
<dbReference type="InterPro" id="IPR008928">
    <property type="entry name" value="6-hairpin_glycosidase_sf"/>
</dbReference>
<dbReference type="InterPro" id="IPR012341">
    <property type="entry name" value="6hp_glycosidase-like_sf"/>
</dbReference>
<dbReference type="InterPro" id="IPR001919">
    <property type="entry name" value="CBD2"/>
</dbReference>
<dbReference type="InterPro" id="IPR008965">
    <property type="entry name" value="CBM2/CBM3_carb-bd_dom_sf"/>
</dbReference>
<dbReference type="InterPro" id="IPR012291">
    <property type="entry name" value="CBM2_carb-bd_dom_sf"/>
</dbReference>
<dbReference type="InterPro" id="IPR018366">
    <property type="entry name" value="CBM2_CS"/>
</dbReference>
<dbReference type="InterPro" id="IPR001956">
    <property type="entry name" value="CBM3"/>
</dbReference>
<dbReference type="InterPro" id="IPR036966">
    <property type="entry name" value="CBM3_sf"/>
</dbReference>
<dbReference type="InterPro" id="IPR003961">
    <property type="entry name" value="FN3_dom"/>
</dbReference>
<dbReference type="InterPro" id="IPR036116">
    <property type="entry name" value="FN3_sf"/>
</dbReference>
<dbReference type="InterPro" id="IPR001701">
    <property type="entry name" value="Glyco_hydro_9"/>
</dbReference>
<dbReference type="InterPro" id="IPR033126">
    <property type="entry name" value="Glyco_hydro_9_Asp/Glu_AS"/>
</dbReference>
<dbReference type="InterPro" id="IPR018221">
    <property type="entry name" value="Glyco_hydro_9_His_AS"/>
</dbReference>
<dbReference type="InterPro" id="IPR013783">
    <property type="entry name" value="Ig-like_fold"/>
</dbReference>
<dbReference type="PANTHER" id="PTHR22298">
    <property type="entry name" value="ENDO-1,4-BETA-GLUCANASE"/>
    <property type="match status" value="1"/>
</dbReference>
<dbReference type="Pfam" id="PF00553">
    <property type="entry name" value="CBM_2"/>
    <property type="match status" value="1"/>
</dbReference>
<dbReference type="Pfam" id="PF00942">
    <property type="entry name" value="CBM_3"/>
    <property type="match status" value="1"/>
</dbReference>
<dbReference type="Pfam" id="PF00041">
    <property type="entry name" value="fn3"/>
    <property type="match status" value="1"/>
</dbReference>
<dbReference type="Pfam" id="PF00759">
    <property type="entry name" value="Glyco_hydro_9"/>
    <property type="match status" value="1"/>
</dbReference>
<dbReference type="SMART" id="SM00637">
    <property type="entry name" value="CBD_II"/>
    <property type="match status" value="1"/>
</dbReference>
<dbReference type="SMART" id="SM01067">
    <property type="entry name" value="CBM_3"/>
    <property type="match status" value="1"/>
</dbReference>
<dbReference type="SMART" id="SM00060">
    <property type="entry name" value="FN3"/>
    <property type="match status" value="1"/>
</dbReference>
<dbReference type="SUPFAM" id="SSF49384">
    <property type="entry name" value="Carbohydrate-binding domain"/>
    <property type="match status" value="2"/>
</dbReference>
<dbReference type="SUPFAM" id="SSF49265">
    <property type="entry name" value="Fibronectin type III"/>
    <property type="match status" value="1"/>
</dbReference>
<dbReference type="SUPFAM" id="SSF48208">
    <property type="entry name" value="Six-hairpin glycosidases"/>
    <property type="match status" value="1"/>
</dbReference>
<dbReference type="PROSITE" id="PS51173">
    <property type="entry name" value="CBM2"/>
    <property type="match status" value="1"/>
</dbReference>
<dbReference type="PROSITE" id="PS00561">
    <property type="entry name" value="CBM2_A"/>
    <property type="match status" value="1"/>
</dbReference>
<dbReference type="PROSITE" id="PS51172">
    <property type="entry name" value="CBM3"/>
    <property type="match status" value="1"/>
</dbReference>
<dbReference type="PROSITE" id="PS50853">
    <property type="entry name" value="FN3"/>
    <property type="match status" value="1"/>
</dbReference>
<dbReference type="PROSITE" id="PS60032">
    <property type="entry name" value="GH9_1"/>
    <property type="match status" value="1"/>
</dbReference>
<dbReference type="PROSITE" id="PS00592">
    <property type="entry name" value="GH9_2"/>
    <property type="match status" value="1"/>
</dbReference>
<dbReference type="PROSITE" id="PS00698">
    <property type="entry name" value="GH9_3"/>
    <property type="match status" value="1"/>
</dbReference>
<proteinExistence type="evidence at protein level"/>
<keyword id="KW-0002">3D-structure</keyword>
<keyword id="KW-0119">Carbohydrate metabolism</keyword>
<keyword id="KW-0136">Cellulose degradation</keyword>
<keyword id="KW-0903">Direct protein sequencing</keyword>
<keyword id="KW-0326">Glycosidase</keyword>
<keyword id="KW-0378">Hydrolase</keyword>
<keyword id="KW-0624">Polysaccharide degradation</keyword>
<keyword id="KW-0732">Signal</keyword>
<reference key="1">
    <citation type="journal article" date="1993" name="Appl. Environ. Microbiol.">
        <title>DNA sequences and expression in Streptomyces lividans of an exoglucanase gene and an endoglucanase gene from Thermomonospora fusca.</title>
        <authorList>
            <person name="Jung E.D."/>
            <person name="Lao G."/>
            <person name="Irwin D."/>
            <person name="Barr B.K."/>
            <person name="Benjamin A."/>
            <person name="Wilson D.B."/>
        </authorList>
    </citation>
    <scope>NUCLEOTIDE SEQUENCE [GENOMIC DNA]</scope>
    <source>
        <strain>YX</strain>
    </source>
</reference>
<reference key="2">
    <citation type="submission" date="1997-02" db="EMBL/GenBank/DDBJ databases">
        <authorList>
            <person name="Wilson D.B."/>
        </authorList>
    </citation>
    <scope>SEQUENCE REVISION</scope>
</reference>
<reference key="3">
    <citation type="journal article" date="1991" name="J. Bacteriol.">
        <title>DNA sequences of three beta-1,4-endoglucanase genes from Thermomonospora fusca.</title>
        <authorList>
            <person name="Lao G."/>
            <person name="Ghangas G.S."/>
            <person name="Jung E.D."/>
            <person name="Wilson D.B."/>
        </authorList>
    </citation>
    <scope>PARTIAL NUCLEOTIDE SEQUENCE [GENOMIC DNA]</scope>
    <source>
        <strain>YX</strain>
    </source>
</reference>
<reference key="4">
    <citation type="journal article" date="1988" name="Methods Enzymol.">
        <title>Cellulases of Thermomonospora fusca.</title>
        <authorList>
            <person name="Wilson D.B."/>
        </authorList>
    </citation>
    <scope>PROTEIN SEQUENCE OF 47-67</scope>
</reference>
<reference key="5">
    <citation type="journal article" date="1997" name="Nat. Struct. Biol.">
        <title>Structure and mechanism of endo/exocellulase E4 from Thermomonospora fusca.</title>
        <authorList>
            <person name="Sakon J."/>
            <person name="Irwin D."/>
            <person name="Wilson D.B."/>
            <person name="Karplus P.A."/>
        </authorList>
    </citation>
    <scope>X-RAY CRYSTALLOGRAPHY (1.9 ANGSTROMS) OF 47-651</scope>
</reference>
<feature type="signal peptide" evidence="9">
    <location>
        <begin position="1"/>
        <end position="46"/>
    </location>
</feature>
<feature type="chain" id="PRO_0000007959" description="Endoglucanase E-4">
    <location>
        <begin position="47"/>
        <end position="880"/>
    </location>
</feature>
<feature type="domain" description="CBM3" evidence="3">
    <location>
        <begin position="504"/>
        <end position="652"/>
    </location>
</feature>
<feature type="domain" description="Fibronectin type-III" evidence="2">
    <location>
        <begin position="678"/>
        <end position="770"/>
    </location>
</feature>
<feature type="domain" description="CBM2" evidence="4">
    <location>
        <begin position="771"/>
        <end position="880"/>
    </location>
</feature>
<feature type="region of interest" description="Disordered" evidence="8">
    <location>
        <begin position="647"/>
        <end position="688"/>
    </location>
</feature>
<feature type="active site" description="Nucleophile" evidence="7">
    <location>
        <position position="104"/>
    </location>
</feature>
<feature type="active site" evidence="5">
    <location>
        <position position="422"/>
    </location>
</feature>
<feature type="active site" evidence="1">
    <location>
        <position position="427"/>
    </location>
</feature>
<feature type="active site" evidence="6">
    <location>
        <position position="461"/>
    </location>
</feature>
<feature type="active site" evidence="6">
    <location>
        <position position="470"/>
    </location>
</feature>
<feature type="helix" evidence="12">
    <location>
        <begin position="52"/>
        <end position="65"/>
    </location>
</feature>
<feature type="turn" evidence="12">
    <location>
        <begin position="85"/>
        <end position="88"/>
    </location>
</feature>
<feature type="helix" evidence="12">
    <location>
        <begin position="89"/>
        <end position="91"/>
    </location>
</feature>
<feature type="strand" evidence="12">
    <location>
        <begin position="102"/>
        <end position="104"/>
    </location>
</feature>
<feature type="helix" evidence="12">
    <location>
        <begin position="109"/>
        <end position="125"/>
    </location>
</feature>
<feature type="helix" evidence="12">
    <location>
        <begin position="127"/>
        <end position="132"/>
    </location>
</feature>
<feature type="helix" evidence="12">
    <location>
        <begin position="136"/>
        <end position="152"/>
    </location>
</feature>
<feature type="strand" evidence="12">
    <location>
        <begin position="159"/>
        <end position="165"/>
    </location>
</feature>
<feature type="helix" evidence="12">
    <location>
        <begin position="167"/>
        <end position="172"/>
    </location>
</feature>
<feature type="helix" evidence="12">
    <location>
        <begin position="177"/>
        <end position="179"/>
    </location>
</feature>
<feature type="strand" evidence="12">
    <location>
        <begin position="186"/>
        <end position="190"/>
    </location>
</feature>
<feature type="helix" evidence="12">
    <location>
        <begin position="196"/>
        <end position="213"/>
    </location>
</feature>
<feature type="turn" evidence="12">
    <location>
        <begin position="214"/>
        <end position="216"/>
    </location>
</feature>
<feature type="helix" evidence="12">
    <location>
        <begin position="218"/>
        <end position="237"/>
    </location>
</feature>
<feature type="helix" evidence="12">
    <location>
        <begin position="242"/>
        <end position="244"/>
    </location>
</feature>
<feature type="helix" evidence="12">
    <location>
        <begin position="249"/>
        <end position="252"/>
    </location>
</feature>
<feature type="helix" evidence="12">
    <location>
        <begin position="259"/>
        <end position="273"/>
    </location>
</feature>
<feature type="helix" evidence="12">
    <location>
        <begin position="276"/>
        <end position="285"/>
    </location>
</feature>
<feature type="helix" evidence="12">
    <location>
        <begin position="286"/>
        <end position="288"/>
    </location>
</feature>
<feature type="strand" evidence="11">
    <location>
        <begin position="295"/>
        <end position="298"/>
    </location>
</feature>
<feature type="strand" evidence="12">
    <location>
        <begin position="305"/>
        <end position="307"/>
    </location>
</feature>
<feature type="helix" evidence="12">
    <location>
        <begin position="310"/>
        <end position="321"/>
    </location>
</feature>
<feature type="helix" evidence="12">
    <location>
        <begin position="324"/>
        <end position="336"/>
    </location>
</feature>
<feature type="turn" evidence="12">
    <location>
        <begin position="337"/>
        <end position="339"/>
    </location>
</feature>
<feature type="strand" evidence="12">
    <location>
        <begin position="358"/>
        <end position="360"/>
    </location>
</feature>
<feature type="helix" evidence="12">
    <location>
        <begin position="361"/>
        <end position="378"/>
    </location>
</feature>
<feature type="helix" evidence="12">
    <location>
        <begin position="382"/>
        <end position="400"/>
    </location>
</feature>
<feature type="strand" evidence="12">
    <location>
        <begin position="413"/>
        <end position="416"/>
    </location>
</feature>
<feature type="helix" evidence="12">
    <location>
        <begin position="424"/>
        <end position="427"/>
    </location>
</feature>
<feature type="strand" evidence="12">
    <location>
        <begin position="430"/>
        <end position="432"/>
    </location>
</feature>
<feature type="strand" evidence="12">
    <location>
        <begin position="436"/>
        <end position="439"/>
    </location>
</feature>
<feature type="turn" evidence="12">
    <location>
        <begin position="466"/>
        <end position="469"/>
    </location>
</feature>
<feature type="helix" evidence="12">
    <location>
        <begin position="473"/>
        <end position="476"/>
    </location>
</feature>
<feature type="helix" evidence="12">
    <location>
        <begin position="477"/>
        <end position="490"/>
    </location>
</feature>
<feature type="strand" evidence="12">
    <location>
        <begin position="508"/>
        <end position="517"/>
    </location>
</feature>
<feature type="strand" evidence="12">
    <location>
        <begin position="520"/>
        <end position="531"/>
    </location>
</feature>
<feature type="strand" evidence="12">
    <location>
        <begin position="542"/>
        <end position="550"/>
    </location>
</feature>
<feature type="helix" evidence="12">
    <location>
        <begin position="557"/>
        <end position="559"/>
    </location>
</feature>
<feature type="strand" evidence="12">
    <location>
        <begin position="561"/>
        <end position="563"/>
    </location>
</feature>
<feature type="strand" evidence="12">
    <location>
        <begin position="565"/>
        <end position="569"/>
    </location>
</feature>
<feature type="strand" evidence="11">
    <location>
        <begin position="576"/>
        <end position="579"/>
    </location>
</feature>
<feature type="strand" evidence="12">
    <location>
        <begin position="582"/>
        <end position="588"/>
    </location>
</feature>
<feature type="strand" evidence="12">
    <location>
        <begin position="596"/>
        <end position="598"/>
    </location>
</feature>
<feature type="turn" evidence="12">
    <location>
        <begin position="599"/>
        <end position="602"/>
    </location>
</feature>
<feature type="strand" evidence="12">
    <location>
        <begin position="603"/>
        <end position="611"/>
    </location>
</feature>
<feature type="helix" evidence="12">
    <location>
        <begin position="618"/>
        <end position="620"/>
    </location>
</feature>
<feature type="helix" evidence="12">
    <location>
        <begin position="622"/>
        <end position="624"/>
    </location>
</feature>
<feature type="strand" evidence="12">
    <location>
        <begin position="637"/>
        <end position="641"/>
    </location>
</feature>
<feature type="strand" evidence="12">
    <location>
        <begin position="644"/>
        <end position="648"/>
    </location>
</feature>
<name>GUN4_THEFU</name>
<sequence>MSVTEPPPRRRGRHSRARRFLTSLGATAALTAGMLGVPLATGTAHAEPAFNYAEALQKSMFFYEAQRSGKLPENNRVSWRGDSGLNDGADVGLDLTGGWYDAGDHVKFGFPMAFTATMLAWGAIESPEGYIRSGQMPYLKDNLRWVNDYFIKAHPSPNVLYVQVGDGDADHKWWGPAEVMPMERPSFKVDPSCPGSDVAAETAAAMAASSIVFADDDPAYAATLVQHAKQLYTFADTYRGVYSDCVPAGAFYNSWSGYQDELVWGAYWLYKATGDDSYLAKAEYEYDFLSTEQQTDLRSYRWTIAWDDKSYGTYVLLAKETGKQKYIDDANRWLDYWTVGVNGQRVPYSPGGMAVLDTWGALRYAANTAFVALVYAKVIDDPVRKQRYHDFAVRQINYALGDNPRNSSYVVGFGNNPPRNPHHRTAHGSWTDSIASPAENRHVLYGALVGGPGSPNDAYTDDRQDYVANEVATDYNAGFSSALAMLVEEYGGTPLADFPPTEEPDGPEIFVEAQINTPGTTFTEIKAMIRNQSGWPARMLDKGTFRYWFTLDEGVDPADITVSSAYNQCATPEDVHHVSGDLYYVEIDCTGEKIFPGGQSEHRREVQFRIAGGPGWDPSNDWSFQGIGNELAPAPYIVLYDDGVPVWGTAPEEGEEPGGGEGPGGGEEPGEDVTPPSAPGSPAVRDVTSTSAVLTWSASSDTGGSGVAGYDVFLRAGTGQEQKVGSTTRTSFTLTGLEPDTTYIAAVVARDNAGNVSQRSTVSFTTLAENGGGPDASCTVGYSTNDWDSGFTASIRITYHGTAPLSSWELSFTFPAGQQVTHGWNATWRQDGAAVTATPMSWNSSLAPGATVEVGFNGSWSGSNTPPTDFTLNGEPCALA</sequence>
<protein>
    <recommendedName>
        <fullName>Endoglucanase E-4</fullName>
        <ecNumber>3.2.1.4</ecNumber>
    </recommendedName>
    <alternativeName>
        <fullName>Cellulase E-4</fullName>
    </alternativeName>
    <alternativeName>
        <fullName>Cellulase E4</fullName>
    </alternativeName>
    <alternativeName>
        <fullName>Endo-1,4-beta-glucanase E-4</fullName>
    </alternativeName>
</protein>